<accession>B1Z924</accession>
<keyword id="KW-0963">Cytoplasm</keyword>
<keyword id="KW-0227">DNA damage</keyword>
<keyword id="KW-0233">DNA recombination</keyword>
<keyword id="KW-0234">DNA repair</keyword>
<keyword id="KW-0238">DNA-binding</keyword>
<proteinExistence type="inferred from homology"/>
<feature type="chain" id="PRO_1000090337" description="Holliday junction branch migration complex subunit RuvA">
    <location>
        <begin position="1"/>
        <end position="208"/>
    </location>
</feature>
<feature type="region of interest" description="Domain I" evidence="1">
    <location>
        <begin position="1"/>
        <end position="64"/>
    </location>
</feature>
<feature type="region of interest" description="Domain II" evidence="1">
    <location>
        <begin position="65"/>
        <end position="143"/>
    </location>
</feature>
<feature type="region of interest" description="Flexible linker" evidence="1">
    <location>
        <begin position="144"/>
        <end position="152"/>
    </location>
</feature>
<feature type="region of interest" description="Domain III" evidence="1">
    <location>
        <begin position="153"/>
        <end position="208"/>
    </location>
</feature>
<dbReference type="EMBL" id="CP001029">
    <property type="protein sequence ID" value="ACB79082.1"/>
    <property type="molecule type" value="Genomic_DNA"/>
</dbReference>
<dbReference type="RefSeq" id="WP_012452838.1">
    <property type="nucleotide sequence ID" value="NC_010725.1"/>
</dbReference>
<dbReference type="SMR" id="B1Z924"/>
<dbReference type="STRING" id="441620.Mpop_0904"/>
<dbReference type="KEGG" id="mpo:Mpop_0904"/>
<dbReference type="eggNOG" id="COG0632">
    <property type="taxonomic scope" value="Bacteria"/>
</dbReference>
<dbReference type="HOGENOM" id="CLU_087936_3_0_5"/>
<dbReference type="OrthoDB" id="5293449at2"/>
<dbReference type="Proteomes" id="UP000007136">
    <property type="component" value="Chromosome"/>
</dbReference>
<dbReference type="GO" id="GO:0005737">
    <property type="term" value="C:cytoplasm"/>
    <property type="evidence" value="ECO:0007669"/>
    <property type="project" value="UniProtKB-SubCell"/>
</dbReference>
<dbReference type="GO" id="GO:0009379">
    <property type="term" value="C:Holliday junction helicase complex"/>
    <property type="evidence" value="ECO:0007669"/>
    <property type="project" value="InterPro"/>
</dbReference>
<dbReference type="GO" id="GO:0048476">
    <property type="term" value="C:Holliday junction resolvase complex"/>
    <property type="evidence" value="ECO:0007669"/>
    <property type="project" value="UniProtKB-UniRule"/>
</dbReference>
<dbReference type="GO" id="GO:0005524">
    <property type="term" value="F:ATP binding"/>
    <property type="evidence" value="ECO:0007669"/>
    <property type="project" value="InterPro"/>
</dbReference>
<dbReference type="GO" id="GO:0000400">
    <property type="term" value="F:four-way junction DNA binding"/>
    <property type="evidence" value="ECO:0007669"/>
    <property type="project" value="UniProtKB-UniRule"/>
</dbReference>
<dbReference type="GO" id="GO:0009378">
    <property type="term" value="F:four-way junction helicase activity"/>
    <property type="evidence" value="ECO:0007669"/>
    <property type="project" value="InterPro"/>
</dbReference>
<dbReference type="GO" id="GO:0006310">
    <property type="term" value="P:DNA recombination"/>
    <property type="evidence" value="ECO:0007669"/>
    <property type="project" value="UniProtKB-UniRule"/>
</dbReference>
<dbReference type="GO" id="GO:0006281">
    <property type="term" value="P:DNA repair"/>
    <property type="evidence" value="ECO:0007669"/>
    <property type="project" value="UniProtKB-UniRule"/>
</dbReference>
<dbReference type="Gene3D" id="1.10.150.20">
    <property type="entry name" value="5' to 3' exonuclease, C-terminal subdomain"/>
    <property type="match status" value="1"/>
</dbReference>
<dbReference type="Gene3D" id="1.10.8.10">
    <property type="entry name" value="DNA helicase RuvA subunit, C-terminal domain"/>
    <property type="match status" value="1"/>
</dbReference>
<dbReference type="Gene3D" id="2.40.50.140">
    <property type="entry name" value="Nucleic acid-binding proteins"/>
    <property type="match status" value="1"/>
</dbReference>
<dbReference type="HAMAP" id="MF_00031">
    <property type="entry name" value="DNA_HJ_migration_RuvA"/>
    <property type="match status" value="1"/>
</dbReference>
<dbReference type="InterPro" id="IPR013849">
    <property type="entry name" value="DNA_helicase_Holl-junc_RuvA_I"/>
</dbReference>
<dbReference type="InterPro" id="IPR012340">
    <property type="entry name" value="NA-bd_OB-fold"/>
</dbReference>
<dbReference type="InterPro" id="IPR000085">
    <property type="entry name" value="RuvA"/>
</dbReference>
<dbReference type="InterPro" id="IPR010994">
    <property type="entry name" value="RuvA_2-like"/>
</dbReference>
<dbReference type="InterPro" id="IPR011114">
    <property type="entry name" value="RuvA_C"/>
</dbReference>
<dbReference type="InterPro" id="IPR036267">
    <property type="entry name" value="RuvA_C_sf"/>
</dbReference>
<dbReference type="NCBIfam" id="TIGR00084">
    <property type="entry name" value="ruvA"/>
    <property type="match status" value="1"/>
</dbReference>
<dbReference type="Pfam" id="PF14520">
    <property type="entry name" value="HHH_5"/>
    <property type="match status" value="1"/>
</dbReference>
<dbReference type="Pfam" id="PF07499">
    <property type="entry name" value="RuvA_C"/>
    <property type="match status" value="1"/>
</dbReference>
<dbReference type="Pfam" id="PF01330">
    <property type="entry name" value="RuvA_N"/>
    <property type="match status" value="1"/>
</dbReference>
<dbReference type="SUPFAM" id="SSF46929">
    <property type="entry name" value="DNA helicase RuvA subunit, C-terminal domain"/>
    <property type="match status" value="1"/>
</dbReference>
<dbReference type="SUPFAM" id="SSF50249">
    <property type="entry name" value="Nucleic acid-binding proteins"/>
    <property type="match status" value="1"/>
</dbReference>
<dbReference type="SUPFAM" id="SSF47781">
    <property type="entry name" value="RuvA domain 2-like"/>
    <property type="match status" value="1"/>
</dbReference>
<protein>
    <recommendedName>
        <fullName evidence="1">Holliday junction branch migration complex subunit RuvA</fullName>
    </recommendedName>
</protein>
<comment type="function">
    <text evidence="1">The RuvA-RuvB-RuvC complex processes Holliday junction (HJ) DNA during genetic recombination and DNA repair, while the RuvA-RuvB complex plays an important role in the rescue of blocked DNA replication forks via replication fork reversal (RFR). RuvA specifically binds to HJ cruciform DNA, conferring on it an open structure. The RuvB hexamer acts as an ATP-dependent pump, pulling dsDNA into and through the RuvAB complex. HJ branch migration allows RuvC to scan DNA until it finds its consensus sequence, where it cleaves and resolves the cruciform DNA.</text>
</comment>
<comment type="subunit">
    <text evidence="1">Homotetramer. Forms an RuvA(8)-RuvB(12)-Holliday junction (HJ) complex. HJ DNA is sandwiched between 2 RuvA tetramers; dsDNA enters through RuvA and exits via RuvB. An RuvB hexamer assembles on each DNA strand where it exits the tetramer. Each RuvB hexamer is contacted by two RuvA subunits (via domain III) on 2 adjacent RuvB subunits; this complex drives branch migration. In the full resolvosome a probable DNA-RuvA(4)-RuvB(12)-RuvC(2) complex forms which resolves the HJ.</text>
</comment>
<comment type="subcellular location">
    <subcellularLocation>
        <location evidence="1">Cytoplasm</location>
    </subcellularLocation>
</comment>
<comment type="domain">
    <text evidence="1">Has three domains with a flexible linker between the domains II and III and assumes an 'L' shape. Domain III is highly mobile and contacts RuvB.</text>
</comment>
<comment type="similarity">
    <text evidence="1">Belongs to the RuvA family.</text>
</comment>
<reference key="1">
    <citation type="submission" date="2008-04" db="EMBL/GenBank/DDBJ databases">
        <title>Complete sequence of chromosome of Methylobacterium populi BJ001.</title>
        <authorList>
            <consortium name="US DOE Joint Genome Institute"/>
            <person name="Copeland A."/>
            <person name="Lucas S."/>
            <person name="Lapidus A."/>
            <person name="Glavina del Rio T."/>
            <person name="Dalin E."/>
            <person name="Tice H."/>
            <person name="Bruce D."/>
            <person name="Goodwin L."/>
            <person name="Pitluck S."/>
            <person name="Chertkov O."/>
            <person name="Brettin T."/>
            <person name="Detter J.C."/>
            <person name="Han C."/>
            <person name="Kuske C.R."/>
            <person name="Schmutz J."/>
            <person name="Larimer F."/>
            <person name="Land M."/>
            <person name="Hauser L."/>
            <person name="Kyrpides N."/>
            <person name="Mikhailova N."/>
            <person name="Marx C."/>
            <person name="Richardson P."/>
        </authorList>
    </citation>
    <scope>NUCLEOTIDE SEQUENCE [LARGE SCALE GENOMIC DNA]</scope>
    <source>
        <strain>ATCC BAA-705 / NCIMB 13946 / BJ001</strain>
    </source>
</reference>
<sequence>MIGKLKGIVDSYGEDFVILDVNGVGYVVHCSARTLQRLPKPGEATDLAIETHVREDMIRLYGFRSDAEREWFRLLQTVQGVGTRVALGVLSVLEPAQLATAIATGDKGAVARAPGVGPRLAARLVAELKDKAPAFAPVDPALVALTGAVEDRTAPQPVADAISALVNLGYPQVQASAAIAAALKGLGDGAETVEAKTLIRLGLRELAR</sequence>
<organism>
    <name type="scientific">Methylorubrum populi (strain ATCC BAA-705 / NCIMB 13946 / BJ001)</name>
    <name type="common">Methylobacterium populi</name>
    <dbReference type="NCBI Taxonomy" id="441620"/>
    <lineage>
        <taxon>Bacteria</taxon>
        <taxon>Pseudomonadati</taxon>
        <taxon>Pseudomonadota</taxon>
        <taxon>Alphaproteobacteria</taxon>
        <taxon>Hyphomicrobiales</taxon>
        <taxon>Methylobacteriaceae</taxon>
        <taxon>Methylorubrum</taxon>
    </lineage>
</organism>
<gene>
    <name evidence="1" type="primary">ruvA</name>
    <name type="ordered locus">Mpop_0904</name>
</gene>
<evidence type="ECO:0000255" key="1">
    <source>
        <dbReference type="HAMAP-Rule" id="MF_00031"/>
    </source>
</evidence>
<name>RUVA_METPB</name>